<gene>
    <name type="primary">LYZ</name>
</gene>
<dbReference type="EC" id="3.2.1.17"/>
<dbReference type="PDB" id="1GHL">
    <property type="method" value="X-ray"/>
    <property type="resolution" value="2.10 A"/>
    <property type="chains" value="A/B=18-147"/>
</dbReference>
<dbReference type="PDB" id="1JHL">
    <property type="method" value="X-ray"/>
    <property type="resolution" value="2.40 A"/>
    <property type="chains" value="A=19-147"/>
</dbReference>
<dbReference type="PDBsum" id="1GHL"/>
<dbReference type="PDBsum" id="1JHL"/>
<dbReference type="SMR" id="P00702"/>
<dbReference type="CAZy" id="GH22">
    <property type="family name" value="Glycoside Hydrolase Family 22"/>
</dbReference>
<dbReference type="ABCD" id="P00702">
    <property type="antibodies" value="1 sequenced antibody"/>
</dbReference>
<dbReference type="EvolutionaryTrace" id="P00702"/>
<dbReference type="GO" id="GO:0005576">
    <property type="term" value="C:extracellular region"/>
    <property type="evidence" value="ECO:0007669"/>
    <property type="project" value="UniProtKB-SubCell"/>
</dbReference>
<dbReference type="GO" id="GO:0003796">
    <property type="term" value="F:lysozyme activity"/>
    <property type="evidence" value="ECO:0007669"/>
    <property type="project" value="UniProtKB-EC"/>
</dbReference>
<dbReference type="GO" id="GO:0050829">
    <property type="term" value="P:defense response to Gram-negative bacterium"/>
    <property type="evidence" value="ECO:0007669"/>
    <property type="project" value="TreeGrafter"/>
</dbReference>
<dbReference type="GO" id="GO:0050830">
    <property type="term" value="P:defense response to Gram-positive bacterium"/>
    <property type="evidence" value="ECO:0007669"/>
    <property type="project" value="TreeGrafter"/>
</dbReference>
<dbReference type="GO" id="GO:0031640">
    <property type="term" value="P:killing of cells of another organism"/>
    <property type="evidence" value="ECO:0007669"/>
    <property type="project" value="UniProtKB-KW"/>
</dbReference>
<dbReference type="CDD" id="cd16897">
    <property type="entry name" value="LYZ_C"/>
    <property type="match status" value="1"/>
</dbReference>
<dbReference type="FunFam" id="1.10.530.10:FF:000001">
    <property type="entry name" value="Lysozyme C"/>
    <property type="match status" value="1"/>
</dbReference>
<dbReference type="Gene3D" id="1.10.530.10">
    <property type="match status" value="1"/>
</dbReference>
<dbReference type="InterPro" id="IPR001916">
    <property type="entry name" value="Glyco_hydro_22"/>
</dbReference>
<dbReference type="InterPro" id="IPR019799">
    <property type="entry name" value="Glyco_hydro_22_CS"/>
</dbReference>
<dbReference type="InterPro" id="IPR000974">
    <property type="entry name" value="Glyco_hydro_22_lys"/>
</dbReference>
<dbReference type="InterPro" id="IPR023346">
    <property type="entry name" value="Lysozyme-like_dom_sf"/>
</dbReference>
<dbReference type="PANTHER" id="PTHR11407">
    <property type="entry name" value="LYSOZYME C"/>
    <property type="match status" value="1"/>
</dbReference>
<dbReference type="PANTHER" id="PTHR11407:SF28">
    <property type="entry name" value="LYSOZYME C"/>
    <property type="match status" value="1"/>
</dbReference>
<dbReference type="Pfam" id="PF00062">
    <property type="entry name" value="Lys"/>
    <property type="match status" value="1"/>
</dbReference>
<dbReference type="PRINTS" id="PR00137">
    <property type="entry name" value="LYSOZYME"/>
</dbReference>
<dbReference type="PRINTS" id="PR00135">
    <property type="entry name" value="LYZLACT"/>
</dbReference>
<dbReference type="SMART" id="SM00263">
    <property type="entry name" value="LYZ1"/>
    <property type="match status" value="1"/>
</dbReference>
<dbReference type="SUPFAM" id="SSF53955">
    <property type="entry name" value="Lysozyme-like"/>
    <property type="match status" value="1"/>
</dbReference>
<dbReference type="PROSITE" id="PS00128">
    <property type="entry name" value="GLYCOSYL_HYDROL_F22_1"/>
    <property type="match status" value="1"/>
</dbReference>
<dbReference type="PROSITE" id="PS51348">
    <property type="entry name" value="GLYCOSYL_HYDROL_F22_2"/>
    <property type="match status" value="1"/>
</dbReference>
<comment type="function">
    <text>Lysozymes have primarily a bacteriolytic function; those in tissues and body fluids are associated with the monocyte-macrophage system and enhance the activity of immunoagents.</text>
</comment>
<comment type="catalytic activity">
    <reaction>
        <text>Hydrolysis of (1-&gt;4)-beta-linkages between N-acetylmuramic acid and N-acetyl-D-glucosamine residues in a peptidoglycan and between N-acetyl-D-glucosamine residues in chitodextrins.</text>
        <dbReference type="EC" id="3.2.1.17"/>
    </reaction>
</comment>
<comment type="subunit">
    <text>Monomer.</text>
</comment>
<comment type="subcellular location">
    <subcellularLocation>
        <location>Secreted</location>
    </subcellularLocation>
</comment>
<comment type="PTM">
    <text>By an evolutionary shift in the site of proteolytic cleavage of prelysozyme, Gly-18 became the N-terminal residue of the mature protein instead of being the C-terminal residue of the signal sequence as in other birds.</text>
</comment>
<comment type="miscellaneous">
    <text>Lysozyme C is capable of both hydrolysis and transglycosylation; it also shows a slight esterase activity. It acts rapidly on both peptide-substituted and unsubstituted peptidoglycan, and slowly on chitin oligosaccharides.</text>
</comment>
<comment type="similarity">
    <text evidence="1">Belongs to the glycosyl hydrolase 22 family.</text>
</comment>
<protein>
    <recommendedName>
        <fullName>Lysozyme C</fullName>
        <ecNumber>3.2.1.17</ecNumber>
    </recommendedName>
    <alternativeName>
        <fullName>1,4-beta-N-acetylmuramidase C</fullName>
    </alternativeName>
</protein>
<organism>
    <name type="scientific">Phasianus colchicus colchicus</name>
    <name type="common">Black-necked pheasant</name>
    <dbReference type="NCBI Taxonomy" id="9057"/>
    <lineage>
        <taxon>Eukaryota</taxon>
        <taxon>Metazoa</taxon>
        <taxon>Chordata</taxon>
        <taxon>Craniata</taxon>
        <taxon>Vertebrata</taxon>
        <taxon>Euteleostomi</taxon>
        <taxon>Archelosauria</taxon>
        <taxon>Archosauria</taxon>
        <taxon>Dinosauria</taxon>
        <taxon>Saurischia</taxon>
        <taxon>Theropoda</taxon>
        <taxon>Coelurosauria</taxon>
        <taxon>Aves</taxon>
        <taxon>Neognathae</taxon>
        <taxon>Galloanserae</taxon>
        <taxon>Galliformes</taxon>
        <taxon>Phasianidae</taxon>
        <taxon>Phasianinae</taxon>
        <taxon>Phasianus</taxon>
    </lineage>
</organism>
<proteinExistence type="evidence at protein level"/>
<feature type="signal peptide" evidence="2">
    <location>
        <begin position="1"/>
        <end position="17"/>
    </location>
</feature>
<feature type="chain" id="PRO_0000018499" description="Lysozyme C">
    <location>
        <begin position="18"/>
        <end position="147"/>
    </location>
</feature>
<feature type="domain" description="C-type lysozyme" evidence="1">
    <location>
        <begin position="19"/>
        <end position="147"/>
    </location>
</feature>
<feature type="active site">
    <location>
        <position position="53"/>
    </location>
</feature>
<feature type="active site">
    <location>
        <position position="70"/>
    </location>
</feature>
<feature type="disulfide bond">
    <location>
        <begin position="24"/>
        <end position="145"/>
    </location>
</feature>
<feature type="disulfide bond">
    <location>
        <begin position="48"/>
        <end position="133"/>
    </location>
</feature>
<feature type="disulfide bond">
    <location>
        <begin position="82"/>
        <end position="98"/>
    </location>
</feature>
<feature type="disulfide bond">
    <location>
        <begin position="94"/>
        <end position="112"/>
    </location>
</feature>
<feature type="helix" evidence="3">
    <location>
        <begin position="23"/>
        <end position="32"/>
    </location>
</feature>
<feature type="helix" evidence="3">
    <location>
        <begin position="43"/>
        <end position="54"/>
    </location>
</feature>
<feature type="strand" evidence="4">
    <location>
        <begin position="55"/>
        <end position="57"/>
    </location>
</feature>
<feature type="strand" evidence="3">
    <location>
        <begin position="61"/>
        <end position="63"/>
    </location>
</feature>
<feature type="strand" evidence="3">
    <location>
        <begin position="69"/>
        <end position="71"/>
    </location>
</feature>
<feature type="turn" evidence="3">
    <location>
        <begin position="72"/>
        <end position="75"/>
    </location>
</feature>
<feature type="turn" evidence="3">
    <location>
        <begin position="78"/>
        <end position="80"/>
    </location>
</feature>
<feature type="strand" evidence="3">
    <location>
        <begin position="85"/>
        <end position="87"/>
    </location>
</feature>
<feature type="helix" evidence="3">
    <location>
        <begin position="98"/>
        <end position="102"/>
    </location>
</feature>
<feature type="strand" evidence="3">
    <location>
        <begin position="103"/>
        <end position="105"/>
    </location>
</feature>
<feature type="helix" evidence="3">
    <location>
        <begin position="107"/>
        <end position="117"/>
    </location>
</feature>
<feature type="turn" evidence="3">
    <location>
        <begin position="118"/>
        <end position="121"/>
    </location>
</feature>
<feature type="helix" evidence="3">
    <location>
        <begin position="122"/>
        <end position="125"/>
    </location>
</feature>
<feature type="helix" evidence="3">
    <location>
        <begin position="127"/>
        <end position="132"/>
    </location>
</feature>
<feature type="turn" evidence="3">
    <location>
        <begin position="133"/>
        <end position="135"/>
    </location>
</feature>
<feature type="helix" evidence="3">
    <location>
        <begin position="138"/>
        <end position="142"/>
    </location>
</feature>
<name>LYSC_PHACO</name>
<keyword id="KW-0002">3D-structure</keyword>
<keyword id="KW-0929">Antimicrobial</keyword>
<keyword id="KW-0081">Bacteriolytic enzyme</keyword>
<keyword id="KW-0903">Direct protein sequencing</keyword>
<keyword id="KW-1015">Disulfide bond</keyword>
<keyword id="KW-0326">Glycosidase</keyword>
<keyword id="KW-0378">Hydrolase</keyword>
<keyword id="KW-0964">Secreted</keyword>
<keyword id="KW-0732">Signal</keyword>
<sequence length="147" mass="16166">MRSLLILVLCFLPLAAPGKVYGRCELAAAMKRMGLDNYRGYSLGNWVCAAKFESNFNTGATNRNTDGSTDYGILQINSRWWCNDGRTPGSKNLCHIPCSALLSSDITASVNCAKKIVSDGNGMNAWVAWRKHCKGTDVNVWIRGCRL</sequence>
<evidence type="ECO:0000255" key="1">
    <source>
        <dbReference type="PROSITE-ProRule" id="PRU00680"/>
    </source>
</evidence>
<evidence type="ECO:0000269" key="2">
    <source>
    </source>
</evidence>
<evidence type="ECO:0007829" key="3">
    <source>
        <dbReference type="PDB" id="1GHL"/>
    </source>
</evidence>
<evidence type="ECO:0007829" key="4">
    <source>
        <dbReference type="PDB" id="1JHL"/>
    </source>
</evidence>
<reference key="1">
    <citation type="journal article" date="1986" name="J. Biol. Chem.">
        <title>Evolutionary shift in the site of cleavage of prelysozyme.</title>
        <authorList>
            <person name="Weisman L.S."/>
            <person name="Krummel B.M."/>
            <person name="Wilson A.C."/>
        </authorList>
    </citation>
    <scope>PROTEIN SEQUENCE OF 1-18 (PRECURSOR PROTEIN)</scope>
</reference>
<reference key="2">
    <citation type="journal article" date="1979" name="Biochemistry">
        <title>Amino acid sequence of pheasant lysozyme. Evolutionary change affecting processing of prelysozyme.</title>
        <authorList>
            <person name="Jolles J."/>
            <person name="Ibrahimi I.M."/>
            <person name="Prager E.M."/>
            <person name="Schoentgen F."/>
            <person name="Jolles P."/>
            <person name="Wilson A.C."/>
        </authorList>
    </citation>
    <scope>PROTEIN SEQUENCE OF 18-147</scope>
</reference>
<reference key="3">
    <citation type="journal article" date="1993" name="Proc. Natl. Acad. Sci. U.S.A.">
        <title>Three-dimensional structure of a heteroclitic antigen-antibody cross-reaction complex.</title>
        <authorList>
            <person name="Chitarra V."/>
            <person name="Alzari P.M."/>
            <person name="Bentley G.A."/>
            <person name="Bhat T.N."/>
            <person name="Eisele J.L."/>
            <person name="Houdusse A."/>
            <person name="Lescar J."/>
            <person name="Souchon H."/>
            <person name="Poljak R.J."/>
        </authorList>
    </citation>
    <scope>X-RAY CRYSTALLOGRAPHY (2.4 ANGSTROMS)</scope>
</reference>
<reference key="4">
    <citation type="journal article" date="1994" name="Protein Sci.">
        <title>Crystal structures of pheasant and guinea fowl egg-white lysozymes.</title>
        <authorList>
            <person name="Lescar J."/>
            <person name="Souchon H."/>
            <person name="Alzari P.M."/>
        </authorList>
    </citation>
    <scope>X-RAY CRYSTALLOGRAPHY (2.1 ANGSTROMS)</scope>
    <scope>SEQUENCE REVISION TO 121</scope>
</reference>
<accession>P00702</accession>